<evidence type="ECO:0000255" key="1">
    <source>
        <dbReference type="PROSITE-ProRule" id="PRU00080"/>
    </source>
</evidence>
<evidence type="ECO:0000305" key="2"/>
<comment type="sequence caution" evidence="2">
    <conflict type="erroneous gene model prediction">
        <sequence resource="EMBL-CDS" id="BAB09900"/>
    </conflict>
</comment>
<sequence>MKAPRLGSEEVSYSDRISYLPDDLLLRILSFIHTSDAISTSLLSKRWKFVWKMMPTLDLDEDSCRNIGTLRFDEGCCMFLKSHEAPVLTSLNLKLMTPSHDIDRLLSNIKPILHEITITSYRYSTIRFPRNLNVCQTLVVMKLQDKVLVDVSFPVCFRSLKSLHLTRVKYSCRESFTTLLSACPVLEDLDLFIGRVHYDCLNSFTIWVPSLQRLSICDESYRFRSTTFEISVPSLKYLKIACQDSCFKFVEDMPNLVEAHVEANQHETKNLLRFLTSVERLKDPDLTDRIFHQLLYLELHLHKRLNGDRILSLLKHSPNLQTLKLNEKPLRSIKDQPNISVRKPNSVPECLTFHLETLEWQGYAGRPEDKEIAVYILGNALRLNTATISRYFSSSRFRHHQKKDLKIVEELKSITKASTSCQLVLQQFIEIKYSM</sequence>
<keyword id="KW-1185">Reference proteome</keyword>
<accession>Q9FJT1</accession>
<accession>F4K938</accession>
<name>FBD29_ARATH</name>
<organism>
    <name type="scientific">Arabidopsis thaliana</name>
    <name type="common">Mouse-ear cress</name>
    <dbReference type="NCBI Taxonomy" id="3702"/>
    <lineage>
        <taxon>Eukaryota</taxon>
        <taxon>Viridiplantae</taxon>
        <taxon>Streptophyta</taxon>
        <taxon>Embryophyta</taxon>
        <taxon>Tracheophyta</taxon>
        <taxon>Spermatophyta</taxon>
        <taxon>Magnoliopsida</taxon>
        <taxon>eudicotyledons</taxon>
        <taxon>Gunneridae</taxon>
        <taxon>Pentapetalae</taxon>
        <taxon>rosids</taxon>
        <taxon>malvids</taxon>
        <taxon>Brassicales</taxon>
        <taxon>Brassicaceae</taxon>
        <taxon>Camelineae</taxon>
        <taxon>Arabidopsis</taxon>
    </lineage>
</organism>
<gene>
    <name type="ordered locus">At5g56820</name>
    <name type="ORF">MIK19.29</name>
</gene>
<protein>
    <recommendedName>
        <fullName>Putative FBD-associated F-box protein At5g56820</fullName>
    </recommendedName>
</protein>
<feature type="chain" id="PRO_0000283161" description="Putative FBD-associated F-box protein At5g56820">
    <location>
        <begin position="1"/>
        <end position="435"/>
    </location>
</feature>
<feature type="domain" description="F-box" evidence="1">
    <location>
        <begin position="14"/>
        <end position="60"/>
    </location>
</feature>
<feature type="domain" description="FBD">
    <location>
        <begin position="341"/>
        <end position="390"/>
    </location>
</feature>
<reference key="1">
    <citation type="journal article" date="1998" name="DNA Res.">
        <title>Structural analysis of Arabidopsis thaliana chromosome 5. VI. Sequence features of the regions of 1,367,185 bp covered by 19 physically assigned P1 and TAC clones.</title>
        <authorList>
            <person name="Kotani H."/>
            <person name="Nakamura Y."/>
            <person name="Sato S."/>
            <person name="Asamizu E."/>
            <person name="Kaneko T."/>
            <person name="Miyajima N."/>
            <person name="Tabata S."/>
        </authorList>
    </citation>
    <scope>NUCLEOTIDE SEQUENCE [LARGE SCALE GENOMIC DNA]</scope>
    <source>
        <strain>cv. Columbia</strain>
    </source>
</reference>
<reference key="2">
    <citation type="journal article" date="2017" name="Plant J.">
        <title>Araport11: a complete reannotation of the Arabidopsis thaliana reference genome.</title>
        <authorList>
            <person name="Cheng C.Y."/>
            <person name="Krishnakumar V."/>
            <person name="Chan A.P."/>
            <person name="Thibaud-Nissen F."/>
            <person name="Schobel S."/>
            <person name="Town C.D."/>
        </authorList>
    </citation>
    <scope>GENOME REANNOTATION</scope>
    <source>
        <strain>cv. Columbia</strain>
    </source>
</reference>
<dbReference type="EMBL" id="AB013392">
    <property type="protein sequence ID" value="BAB09900.1"/>
    <property type="status" value="ALT_SEQ"/>
    <property type="molecule type" value="Genomic_DNA"/>
</dbReference>
<dbReference type="EMBL" id="CP002688">
    <property type="protein sequence ID" value="AED96811.1"/>
    <property type="molecule type" value="Genomic_DNA"/>
</dbReference>
<dbReference type="RefSeq" id="NP_200493.2">
    <property type="nucleotide sequence ID" value="NM_125065.2"/>
</dbReference>
<dbReference type="PaxDb" id="3702-AT5G56820.1"/>
<dbReference type="EnsemblPlants" id="AT5G56820.1">
    <property type="protein sequence ID" value="AT5G56820.1"/>
    <property type="gene ID" value="AT5G56820"/>
</dbReference>
<dbReference type="GeneID" id="835784"/>
<dbReference type="Gramene" id="AT5G56820.1">
    <property type="protein sequence ID" value="AT5G56820.1"/>
    <property type="gene ID" value="AT5G56820"/>
</dbReference>
<dbReference type="KEGG" id="ath:AT5G56820"/>
<dbReference type="Araport" id="AT5G56820"/>
<dbReference type="TAIR" id="AT5G56820"/>
<dbReference type="HOGENOM" id="CLU_010721_1_2_1"/>
<dbReference type="InParanoid" id="Q9FJT1"/>
<dbReference type="OMA" id="CLTFHLE"/>
<dbReference type="PRO" id="PR:Q9FJT1"/>
<dbReference type="Proteomes" id="UP000006548">
    <property type="component" value="Chromosome 5"/>
</dbReference>
<dbReference type="CDD" id="cd22160">
    <property type="entry name" value="F-box_AtFBL13-like"/>
    <property type="match status" value="1"/>
</dbReference>
<dbReference type="Gene3D" id="1.20.1280.50">
    <property type="match status" value="1"/>
</dbReference>
<dbReference type="Gene3D" id="3.80.10.10">
    <property type="entry name" value="Ribonuclease Inhibitor"/>
    <property type="match status" value="1"/>
</dbReference>
<dbReference type="InterPro" id="IPR036047">
    <property type="entry name" value="F-box-like_dom_sf"/>
</dbReference>
<dbReference type="InterPro" id="IPR053781">
    <property type="entry name" value="F-box_AtFBL13-like"/>
</dbReference>
<dbReference type="InterPro" id="IPR001810">
    <property type="entry name" value="F-box_dom"/>
</dbReference>
<dbReference type="InterPro" id="IPR006566">
    <property type="entry name" value="FBD"/>
</dbReference>
<dbReference type="InterPro" id="IPR050232">
    <property type="entry name" value="FBL13/AtMIF1-like"/>
</dbReference>
<dbReference type="InterPro" id="IPR032675">
    <property type="entry name" value="LRR_dom_sf"/>
</dbReference>
<dbReference type="InterPro" id="IPR013101">
    <property type="entry name" value="LRR_PRU1-like"/>
</dbReference>
<dbReference type="PANTHER" id="PTHR31900:SF34">
    <property type="entry name" value="EMB|CAB62440.1-RELATED"/>
    <property type="match status" value="1"/>
</dbReference>
<dbReference type="PANTHER" id="PTHR31900">
    <property type="entry name" value="F-BOX/RNI SUPERFAMILY PROTEIN-RELATED"/>
    <property type="match status" value="1"/>
</dbReference>
<dbReference type="Pfam" id="PF00646">
    <property type="entry name" value="F-box"/>
    <property type="match status" value="1"/>
</dbReference>
<dbReference type="Pfam" id="PF08387">
    <property type="entry name" value="FBD"/>
    <property type="match status" value="1"/>
</dbReference>
<dbReference type="Pfam" id="PF07723">
    <property type="entry name" value="LRR_2"/>
    <property type="match status" value="1"/>
</dbReference>
<dbReference type="SMART" id="SM00579">
    <property type="entry name" value="FBD"/>
    <property type="match status" value="1"/>
</dbReference>
<dbReference type="SUPFAM" id="SSF81383">
    <property type="entry name" value="F-box domain"/>
    <property type="match status" value="1"/>
</dbReference>
<dbReference type="SUPFAM" id="SSF52047">
    <property type="entry name" value="RNI-like"/>
    <property type="match status" value="1"/>
</dbReference>
<dbReference type="PROSITE" id="PS50181">
    <property type="entry name" value="FBOX"/>
    <property type="match status" value="1"/>
</dbReference>
<proteinExistence type="predicted"/>